<comment type="function">
    <text evidence="1">Catalyzes the formation of 5-methyl-uridine at position 1939 (m5U1939) in 23S rRNA.</text>
</comment>
<comment type="catalytic activity">
    <reaction evidence="1">
        <text>uridine(1939) in 23S rRNA + S-adenosyl-L-methionine = 5-methyluridine(1939) in 23S rRNA + S-adenosyl-L-homocysteine + H(+)</text>
        <dbReference type="Rhea" id="RHEA:42908"/>
        <dbReference type="Rhea" id="RHEA-COMP:10278"/>
        <dbReference type="Rhea" id="RHEA-COMP:10279"/>
        <dbReference type="ChEBI" id="CHEBI:15378"/>
        <dbReference type="ChEBI" id="CHEBI:57856"/>
        <dbReference type="ChEBI" id="CHEBI:59789"/>
        <dbReference type="ChEBI" id="CHEBI:65315"/>
        <dbReference type="ChEBI" id="CHEBI:74447"/>
        <dbReference type="EC" id="2.1.1.190"/>
    </reaction>
</comment>
<comment type="similarity">
    <text evidence="1">Belongs to the class I-like SAM-binding methyltransferase superfamily. RNA M5U methyltransferase family. RlmD subfamily.</text>
</comment>
<keyword id="KW-0004">4Fe-4S</keyword>
<keyword id="KW-0408">Iron</keyword>
<keyword id="KW-0411">Iron-sulfur</keyword>
<keyword id="KW-0479">Metal-binding</keyword>
<keyword id="KW-0489">Methyltransferase</keyword>
<keyword id="KW-0698">rRNA processing</keyword>
<keyword id="KW-0949">S-adenosyl-L-methionine</keyword>
<keyword id="KW-0808">Transferase</keyword>
<proteinExistence type="inferred from homology"/>
<protein>
    <recommendedName>
        <fullName evidence="1">23S rRNA (uracil(1939)-C(5))-methyltransferase RlmD</fullName>
        <ecNumber evidence="1">2.1.1.190</ecNumber>
    </recommendedName>
    <alternativeName>
        <fullName evidence="1">23S rRNA(m5U1939)-methyltransferase</fullName>
    </alternativeName>
</protein>
<feature type="chain" id="PRO_1000200862" description="23S rRNA (uracil(1939)-C(5))-methyltransferase RlmD">
    <location>
        <begin position="1"/>
        <end position="443"/>
    </location>
</feature>
<feature type="domain" description="TRAM" evidence="1">
    <location>
        <begin position="10"/>
        <end position="68"/>
    </location>
</feature>
<feature type="active site" description="Nucleophile" evidence="1">
    <location>
        <position position="395"/>
    </location>
</feature>
<feature type="binding site" evidence="1">
    <location>
        <position position="81"/>
    </location>
    <ligand>
        <name>[4Fe-4S] cluster</name>
        <dbReference type="ChEBI" id="CHEBI:49883"/>
    </ligand>
</feature>
<feature type="binding site" evidence="1">
    <location>
        <position position="87"/>
    </location>
    <ligand>
        <name>[4Fe-4S] cluster</name>
        <dbReference type="ChEBI" id="CHEBI:49883"/>
    </ligand>
</feature>
<feature type="binding site" evidence="1">
    <location>
        <position position="90"/>
    </location>
    <ligand>
        <name>[4Fe-4S] cluster</name>
        <dbReference type="ChEBI" id="CHEBI:49883"/>
    </ligand>
</feature>
<feature type="binding site" evidence="1">
    <location>
        <position position="168"/>
    </location>
    <ligand>
        <name>[4Fe-4S] cluster</name>
        <dbReference type="ChEBI" id="CHEBI:49883"/>
    </ligand>
</feature>
<feature type="binding site" evidence="1">
    <location>
        <position position="271"/>
    </location>
    <ligand>
        <name>S-adenosyl-L-methionine</name>
        <dbReference type="ChEBI" id="CHEBI:59789"/>
    </ligand>
</feature>
<feature type="binding site" evidence="1">
    <location>
        <position position="300"/>
    </location>
    <ligand>
        <name>S-adenosyl-L-methionine</name>
        <dbReference type="ChEBI" id="CHEBI:59789"/>
    </ligand>
</feature>
<feature type="binding site" evidence="1">
    <location>
        <position position="305"/>
    </location>
    <ligand>
        <name>S-adenosyl-L-methionine</name>
        <dbReference type="ChEBI" id="CHEBI:59789"/>
    </ligand>
</feature>
<feature type="binding site" evidence="1">
    <location>
        <position position="321"/>
    </location>
    <ligand>
        <name>S-adenosyl-L-methionine</name>
        <dbReference type="ChEBI" id="CHEBI:59789"/>
    </ligand>
</feature>
<feature type="binding site" evidence="1">
    <location>
        <position position="348"/>
    </location>
    <ligand>
        <name>S-adenosyl-L-methionine</name>
        <dbReference type="ChEBI" id="CHEBI:59789"/>
    </ligand>
</feature>
<feature type="binding site" evidence="1">
    <location>
        <position position="369"/>
    </location>
    <ligand>
        <name>S-adenosyl-L-methionine</name>
        <dbReference type="ChEBI" id="CHEBI:59789"/>
    </ligand>
</feature>
<dbReference type="EC" id="2.1.1.190" evidence="1"/>
<dbReference type="EMBL" id="AM286415">
    <property type="protein sequence ID" value="CAL10847.1"/>
    <property type="molecule type" value="Genomic_DNA"/>
</dbReference>
<dbReference type="RefSeq" id="WP_005167240.1">
    <property type="nucleotide sequence ID" value="NC_008800.1"/>
</dbReference>
<dbReference type="RefSeq" id="YP_001005087.1">
    <property type="nucleotide sequence ID" value="NC_008800.1"/>
</dbReference>
<dbReference type="SMR" id="A1JJR0"/>
<dbReference type="KEGG" id="yen:YE0743"/>
<dbReference type="PATRIC" id="fig|393305.7.peg.838"/>
<dbReference type="eggNOG" id="COG2265">
    <property type="taxonomic scope" value="Bacteria"/>
</dbReference>
<dbReference type="HOGENOM" id="CLU_014689_8_2_6"/>
<dbReference type="OrthoDB" id="9804590at2"/>
<dbReference type="Proteomes" id="UP000000642">
    <property type="component" value="Chromosome"/>
</dbReference>
<dbReference type="GO" id="GO:0051539">
    <property type="term" value="F:4 iron, 4 sulfur cluster binding"/>
    <property type="evidence" value="ECO:0007669"/>
    <property type="project" value="UniProtKB-KW"/>
</dbReference>
<dbReference type="GO" id="GO:0005506">
    <property type="term" value="F:iron ion binding"/>
    <property type="evidence" value="ECO:0007669"/>
    <property type="project" value="UniProtKB-UniRule"/>
</dbReference>
<dbReference type="GO" id="GO:0003723">
    <property type="term" value="F:RNA binding"/>
    <property type="evidence" value="ECO:0007669"/>
    <property type="project" value="InterPro"/>
</dbReference>
<dbReference type="GO" id="GO:0070041">
    <property type="term" value="F:rRNA (uridine-C5-)-methyltransferase activity"/>
    <property type="evidence" value="ECO:0007669"/>
    <property type="project" value="UniProtKB-UniRule"/>
</dbReference>
<dbReference type="GO" id="GO:0070475">
    <property type="term" value="P:rRNA base methylation"/>
    <property type="evidence" value="ECO:0007669"/>
    <property type="project" value="TreeGrafter"/>
</dbReference>
<dbReference type="CDD" id="cd02440">
    <property type="entry name" value="AdoMet_MTases"/>
    <property type="match status" value="1"/>
</dbReference>
<dbReference type="FunFam" id="3.40.50.150:FF:000009">
    <property type="entry name" value="23S rRNA (Uracil(1939)-C(5))-methyltransferase RlmD"/>
    <property type="match status" value="1"/>
</dbReference>
<dbReference type="FunFam" id="2.40.50.140:FF:000097">
    <property type="entry name" value="23S rRNA (uracil(1939)-C(5))-methyltransferase RlmD"/>
    <property type="match status" value="1"/>
</dbReference>
<dbReference type="Gene3D" id="2.40.50.1070">
    <property type="match status" value="1"/>
</dbReference>
<dbReference type="Gene3D" id="2.40.50.140">
    <property type="entry name" value="Nucleic acid-binding proteins"/>
    <property type="match status" value="1"/>
</dbReference>
<dbReference type="Gene3D" id="3.40.50.150">
    <property type="entry name" value="Vaccinia Virus protein VP39"/>
    <property type="match status" value="1"/>
</dbReference>
<dbReference type="HAMAP" id="MF_01010">
    <property type="entry name" value="23SrRNA_methyltr_RlmD"/>
    <property type="match status" value="1"/>
</dbReference>
<dbReference type="InterPro" id="IPR001566">
    <property type="entry name" value="23S_rRNA_MeTrfase_RlmD"/>
</dbReference>
<dbReference type="InterPro" id="IPR030390">
    <property type="entry name" value="MeTrfase_TrmA_AS"/>
</dbReference>
<dbReference type="InterPro" id="IPR030391">
    <property type="entry name" value="MeTrfase_TrmA_CS"/>
</dbReference>
<dbReference type="InterPro" id="IPR012340">
    <property type="entry name" value="NA-bd_OB-fold"/>
</dbReference>
<dbReference type="InterPro" id="IPR029063">
    <property type="entry name" value="SAM-dependent_MTases_sf"/>
</dbReference>
<dbReference type="InterPro" id="IPR002792">
    <property type="entry name" value="TRAM_dom"/>
</dbReference>
<dbReference type="InterPro" id="IPR010280">
    <property type="entry name" value="U5_MeTrfase_fam"/>
</dbReference>
<dbReference type="NCBIfam" id="NF009639">
    <property type="entry name" value="PRK13168.1"/>
    <property type="match status" value="1"/>
</dbReference>
<dbReference type="NCBIfam" id="TIGR00479">
    <property type="entry name" value="rumA"/>
    <property type="match status" value="1"/>
</dbReference>
<dbReference type="PANTHER" id="PTHR11061:SF49">
    <property type="entry name" value="23S RRNA (URACIL(1939)-C(5))-METHYLTRANSFERASE RLMD"/>
    <property type="match status" value="1"/>
</dbReference>
<dbReference type="PANTHER" id="PTHR11061">
    <property type="entry name" value="RNA M5U METHYLTRANSFERASE"/>
    <property type="match status" value="1"/>
</dbReference>
<dbReference type="Pfam" id="PF01938">
    <property type="entry name" value="TRAM"/>
    <property type="match status" value="1"/>
</dbReference>
<dbReference type="Pfam" id="PF05958">
    <property type="entry name" value="tRNA_U5-meth_tr"/>
    <property type="match status" value="1"/>
</dbReference>
<dbReference type="SUPFAM" id="SSF50249">
    <property type="entry name" value="Nucleic acid-binding proteins"/>
    <property type="match status" value="1"/>
</dbReference>
<dbReference type="SUPFAM" id="SSF53335">
    <property type="entry name" value="S-adenosyl-L-methionine-dependent methyltransferases"/>
    <property type="match status" value="1"/>
</dbReference>
<dbReference type="PROSITE" id="PS51687">
    <property type="entry name" value="SAM_MT_RNA_M5U"/>
    <property type="match status" value="1"/>
</dbReference>
<dbReference type="PROSITE" id="PS50926">
    <property type="entry name" value="TRAM"/>
    <property type="match status" value="1"/>
</dbReference>
<dbReference type="PROSITE" id="PS01230">
    <property type="entry name" value="TRMA_1"/>
    <property type="match status" value="1"/>
</dbReference>
<dbReference type="PROSITE" id="PS01231">
    <property type="entry name" value="TRMA_2"/>
    <property type="match status" value="1"/>
</dbReference>
<name>RLMD_YERE8</name>
<organism>
    <name type="scientific">Yersinia enterocolitica serotype O:8 / biotype 1B (strain NCTC 13174 / 8081)</name>
    <dbReference type="NCBI Taxonomy" id="393305"/>
    <lineage>
        <taxon>Bacteria</taxon>
        <taxon>Pseudomonadati</taxon>
        <taxon>Pseudomonadota</taxon>
        <taxon>Gammaproteobacteria</taxon>
        <taxon>Enterobacterales</taxon>
        <taxon>Yersiniaceae</taxon>
        <taxon>Yersinia</taxon>
    </lineage>
</organism>
<reference key="1">
    <citation type="journal article" date="2006" name="PLoS Genet.">
        <title>The complete genome sequence and comparative genome analysis of the high pathogenicity Yersinia enterocolitica strain 8081.</title>
        <authorList>
            <person name="Thomson N.R."/>
            <person name="Howard S."/>
            <person name="Wren B.W."/>
            <person name="Holden M.T.G."/>
            <person name="Crossman L."/>
            <person name="Challis G.L."/>
            <person name="Churcher C."/>
            <person name="Mungall K."/>
            <person name="Brooks K."/>
            <person name="Chillingworth T."/>
            <person name="Feltwell T."/>
            <person name="Abdellah Z."/>
            <person name="Hauser H."/>
            <person name="Jagels K."/>
            <person name="Maddison M."/>
            <person name="Moule S."/>
            <person name="Sanders M."/>
            <person name="Whitehead S."/>
            <person name="Quail M.A."/>
            <person name="Dougan G."/>
            <person name="Parkhill J."/>
            <person name="Prentice M.B."/>
        </authorList>
    </citation>
    <scope>NUCLEOTIDE SEQUENCE [LARGE SCALE GENOMIC DNA]</scope>
    <source>
        <strain>NCTC 13174 / 8081</strain>
    </source>
</reference>
<evidence type="ECO:0000255" key="1">
    <source>
        <dbReference type="HAMAP-Rule" id="MF_01010"/>
    </source>
</evidence>
<gene>
    <name evidence="1" type="primary">rlmD</name>
    <name type="synonym">rumA</name>
    <name type="ordered locus">YE0743</name>
</gene>
<sequence length="443" mass="49429">MAQFYSPNRRVTTKQTLTVTVNSLDPFGQGVAHHQGKAIFIPGALPGEQAEIELTEQKRQYSRGKLKRLLNRCNERVVPACPHFGICGGCQQQHANSQLQQMSKADSLQRLIMREAGACPQLDPVICGSEYGYRRRARLGLLYQPKQHRLQMGFRQTESHDLVCIKHCPVLRPELERLLLPLYQCLSGLQAVRRLGHVELVLADNGPLMVLRHLDTLKEVDRAALIDFAKREQVAVYLAGDSDNVEKLIGEEPYYQIEGLRLAFHPRDFIQVNDTVNQQMVAQAIAWLDVQPDERVLDLFCGMGNFTLPLAKLAREVVGVEGVAALVANGQYNALNNALPNVSFFHENLESDISRQPWATQGFDKVLLDPARAGAAGVMSHIVKLAPKRVVYVSCNPTTLARDSQVLLAAGYRLAQVRMLDMFPHTGHLESMALFMQEPGVAK</sequence>
<accession>A1JJR0</accession>